<name>HARS1_PONAB</name>
<comment type="function">
    <text evidence="2">Catalyzes the ATP-dependent ligation of histidine to the 3'-end of its cognate tRNA, via the formation of an aminoacyl-adenylate intermediate (His-AMP). Plays a role in axon guidance.</text>
</comment>
<comment type="catalytic activity">
    <reaction evidence="2">
        <text>tRNA(His) + L-histidine + ATP = L-histidyl-tRNA(His) + AMP + diphosphate + H(+)</text>
        <dbReference type="Rhea" id="RHEA:17313"/>
        <dbReference type="Rhea" id="RHEA-COMP:9665"/>
        <dbReference type="Rhea" id="RHEA-COMP:9689"/>
        <dbReference type="ChEBI" id="CHEBI:15378"/>
        <dbReference type="ChEBI" id="CHEBI:30616"/>
        <dbReference type="ChEBI" id="CHEBI:33019"/>
        <dbReference type="ChEBI" id="CHEBI:57595"/>
        <dbReference type="ChEBI" id="CHEBI:78442"/>
        <dbReference type="ChEBI" id="CHEBI:78527"/>
        <dbReference type="ChEBI" id="CHEBI:456215"/>
        <dbReference type="EC" id="6.1.1.21"/>
    </reaction>
</comment>
<comment type="subunit">
    <text evidence="2">Homodimer.</text>
</comment>
<comment type="subcellular location">
    <subcellularLocation>
        <location evidence="1">Cytoplasm</location>
    </subcellularLocation>
</comment>
<comment type="similarity">
    <text evidence="4">Belongs to the class-II aminoacyl-tRNA synthetase family.</text>
</comment>
<organism>
    <name type="scientific">Pongo abelii</name>
    <name type="common">Sumatran orangutan</name>
    <name type="synonym">Pongo pygmaeus abelii</name>
    <dbReference type="NCBI Taxonomy" id="9601"/>
    <lineage>
        <taxon>Eukaryota</taxon>
        <taxon>Metazoa</taxon>
        <taxon>Chordata</taxon>
        <taxon>Craniata</taxon>
        <taxon>Vertebrata</taxon>
        <taxon>Euteleostomi</taxon>
        <taxon>Mammalia</taxon>
        <taxon>Eutheria</taxon>
        <taxon>Euarchontoglires</taxon>
        <taxon>Primates</taxon>
        <taxon>Haplorrhini</taxon>
        <taxon>Catarrhini</taxon>
        <taxon>Hominidae</taxon>
        <taxon>Pongo</taxon>
    </lineage>
</organism>
<sequence>MAERAALEELVKLQGERVRGLKQQKASAELIEEEVAKLLKLKAQLGPDESKQKFVLKTPKGTRDYSPRQMAVREKVFDVIIRCFKRHGAEVIDTPVFELKETLMGKYGEDSKLIYDLKDQGGELLSLRYDLTVPFARYLAMNKLTNIKRYHIAKVYRRDNPAMTRGRYREFYQCDFDIAGNFDPMIPDAECLKIMCEILSSLQIGDFLVKVNDRRILDGMFAICGVSDSKFRTICSSVDKLDKVSWEEVKNEMVGEKGLAPEVADRIGDYVQQHGGVSLVEQLLQDPKLSQSKQALEGLGDLKLLFEYLTLFGIDDKISFDLSLARGLDYYTGVIYEAVLLQTPAQAGEEPLGVGSVAAGGRYDGLVGMFDPKGRKVPCVGLSIGVERIFSIVEQRLEALEEKVRTTETQVLVASAQKKLLEERLKLVSELWDAGIKAELLYKKNPKLLNQLQYCEEAGIPLVAIIGEQELEDGVIKLRSVTSREEVDVRREDLVEEIKRRTGQPLCIC</sequence>
<keyword id="KW-0007">Acetylation</keyword>
<keyword id="KW-0030">Aminoacyl-tRNA synthetase</keyword>
<keyword id="KW-0067">ATP-binding</keyword>
<keyword id="KW-0963">Cytoplasm</keyword>
<keyword id="KW-0436">Ligase</keyword>
<keyword id="KW-0547">Nucleotide-binding</keyword>
<keyword id="KW-0597">Phosphoprotein</keyword>
<keyword id="KW-0648">Protein biosynthesis</keyword>
<keyword id="KW-1185">Reference proteome</keyword>
<accession>Q5R4R2</accession>
<dbReference type="EC" id="6.1.1.21" evidence="2"/>
<dbReference type="EMBL" id="CR861182">
    <property type="protein sequence ID" value="CAH93254.1"/>
    <property type="molecule type" value="mRNA"/>
</dbReference>
<dbReference type="RefSeq" id="NP_001126914.1">
    <property type="nucleotide sequence ID" value="NM_001133442.1"/>
</dbReference>
<dbReference type="SMR" id="Q5R4R2"/>
<dbReference type="FunCoup" id="Q5R4R2">
    <property type="interactions" value="3465"/>
</dbReference>
<dbReference type="STRING" id="9601.ENSPPYP00000017740"/>
<dbReference type="GeneID" id="100173931"/>
<dbReference type="KEGG" id="pon:100173931"/>
<dbReference type="CTD" id="3035"/>
<dbReference type="eggNOG" id="KOG1936">
    <property type="taxonomic scope" value="Eukaryota"/>
</dbReference>
<dbReference type="InParanoid" id="Q5R4R2"/>
<dbReference type="OrthoDB" id="1906957at2759"/>
<dbReference type="Proteomes" id="UP000001595">
    <property type="component" value="Unplaced"/>
</dbReference>
<dbReference type="GO" id="GO:0005737">
    <property type="term" value="C:cytoplasm"/>
    <property type="evidence" value="ECO:0000250"/>
    <property type="project" value="UniProtKB"/>
</dbReference>
<dbReference type="GO" id="GO:0005829">
    <property type="term" value="C:cytosol"/>
    <property type="evidence" value="ECO:0007669"/>
    <property type="project" value="TreeGrafter"/>
</dbReference>
<dbReference type="GO" id="GO:0005739">
    <property type="term" value="C:mitochondrion"/>
    <property type="evidence" value="ECO:0007669"/>
    <property type="project" value="TreeGrafter"/>
</dbReference>
<dbReference type="GO" id="GO:0005524">
    <property type="term" value="F:ATP binding"/>
    <property type="evidence" value="ECO:0000250"/>
    <property type="project" value="UniProtKB"/>
</dbReference>
<dbReference type="GO" id="GO:0004821">
    <property type="term" value="F:histidine-tRNA ligase activity"/>
    <property type="evidence" value="ECO:0000250"/>
    <property type="project" value="UniProtKB"/>
</dbReference>
<dbReference type="GO" id="GO:0042803">
    <property type="term" value="F:protein homodimerization activity"/>
    <property type="evidence" value="ECO:0000250"/>
    <property type="project" value="UniProtKB"/>
</dbReference>
<dbReference type="GO" id="GO:0003723">
    <property type="term" value="F:RNA binding"/>
    <property type="evidence" value="ECO:0007669"/>
    <property type="project" value="TreeGrafter"/>
</dbReference>
<dbReference type="GO" id="GO:0006427">
    <property type="term" value="P:histidyl-tRNA aminoacylation"/>
    <property type="evidence" value="ECO:0000250"/>
    <property type="project" value="UniProtKB"/>
</dbReference>
<dbReference type="GO" id="GO:0032543">
    <property type="term" value="P:mitochondrial translation"/>
    <property type="evidence" value="ECO:0007669"/>
    <property type="project" value="TreeGrafter"/>
</dbReference>
<dbReference type="CDD" id="cd00773">
    <property type="entry name" value="HisRS-like_core"/>
    <property type="match status" value="1"/>
</dbReference>
<dbReference type="CDD" id="cd00859">
    <property type="entry name" value="HisRS_anticodon"/>
    <property type="match status" value="1"/>
</dbReference>
<dbReference type="CDD" id="cd00938">
    <property type="entry name" value="HisRS_RNA"/>
    <property type="match status" value="1"/>
</dbReference>
<dbReference type="FunFam" id="3.40.50.800:FF:000008">
    <property type="entry name" value="histidine--tRNA ligase, cytoplasmic isoform X1"/>
    <property type="match status" value="1"/>
</dbReference>
<dbReference type="FunFam" id="1.10.287.10:FF:000008">
    <property type="entry name" value="histidine--tRNA ligase, cytoplasmic isoform X6"/>
    <property type="match status" value="1"/>
</dbReference>
<dbReference type="FunFam" id="3.30.930.10:FF:000021">
    <property type="entry name" value="Probable histidine--tRNA ligase, mitochondrial"/>
    <property type="match status" value="1"/>
</dbReference>
<dbReference type="Gene3D" id="3.40.50.800">
    <property type="entry name" value="Anticodon-binding domain"/>
    <property type="match status" value="1"/>
</dbReference>
<dbReference type="Gene3D" id="3.30.930.10">
    <property type="entry name" value="Bira Bifunctional Protein, Domain 2"/>
    <property type="match status" value="1"/>
</dbReference>
<dbReference type="Gene3D" id="1.10.287.10">
    <property type="entry name" value="S15/NS1, RNA-binding"/>
    <property type="match status" value="1"/>
</dbReference>
<dbReference type="HAMAP" id="MF_00127">
    <property type="entry name" value="His_tRNA_synth"/>
    <property type="match status" value="1"/>
</dbReference>
<dbReference type="InterPro" id="IPR006195">
    <property type="entry name" value="aa-tRNA-synth_II"/>
</dbReference>
<dbReference type="InterPro" id="IPR045864">
    <property type="entry name" value="aa-tRNA-synth_II/BPL/LPL"/>
</dbReference>
<dbReference type="InterPro" id="IPR004154">
    <property type="entry name" value="Anticodon-bd"/>
</dbReference>
<dbReference type="InterPro" id="IPR036621">
    <property type="entry name" value="Anticodon-bd_dom_sf"/>
</dbReference>
<dbReference type="InterPro" id="IPR015807">
    <property type="entry name" value="His-tRNA-ligase"/>
</dbReference>
<dbReference type="InterPro" id="IPR041715">
    <property type="entry name" value="HisRS-like_core"/>
</dbReference>
<dbReference type="InterPro" id="IPR004516">
    <property type="entry name" value="HisRS/HisZ"/>
</dbReference>
<dbReference type="InterPro" id="IPR033656">
    <property type="entry name" value="HisRS_anticodon"/>
</dbReference>
<dbReference type="InterPro" id="IPR009068">
    <property type="entry name" value="uS15_NS1_RNA-bd_sf"/>
</dbReference>
<dbReference type="InterPro" id="IPR000738">
    <property type="entry name" value="WHEP-TRS_dom"/>
</dbReference>
<dbReference type="NCBIfam" id="TIGR00442">
    <property type="entry name" value="hisS"/>
    <property type="match status" value="1"/>
</dbReference>
<dbReference type="PANTHER" id="PTHR11476:SF8">
    <property type="entry name" value="HISTIDINE--TRNA LIGASE, CYTOPLASMIC"/>
    <property type="match status" value="1"/>
</dbReference>
<dbReference type="PANTHER" id="PTHR11476">
    <property type="entry name" value="HISTIDYL-TRNA SYNTHETASE"/>
    <property type="match status" value="1"/>
</dbReference>
<dbReference type="Pfam" id="PF03129">
    <property type="entry name" value="HGTP_anticodon"/>
    <property type="match status" value="1"/>
</dbReference>
<dbReference type="Pfam" id="PF13393">
    <property type="entry name" value="tRNA-synt_His"/>
    <property type="match status" value="1"/>
</dbReference>
<dbReference type="Pfam" id="PF00458">
    <property type="entry name" value="WHEP-TRS"/>
    <property type="match status" value="1"/>
</dbReference>
<dbReference type="PIRSF" id="PIRSF001549">
    <property type="entry name" value="His-tRNA_synth"/>
    <property type="match status" value="1"/>
</dbReference>
<dbReference type="SMART" id="SM00991">
    <property type="entry name" value="WHEP-TRS"/>
    <property type="match status" value="1"/>
</dbReference>
<dbReference type="SUPFAM" id="SSF52954">
    <property type="entry name" value="Class II aaRS ABD-related"/>
    <property type="match status" value="1"/>
</dbReference>
<dbReference type="SUPFAM" id="SSF55681">
    <property type="entry name" value="Class II aaRS and biotin synthetases"/>
    <property type="match status" value="1"/>
</dbReference>
<dbReference type="SUPFAM" id="SSF47060">
    <property type="entry name" value="S15/NS1 RNA-binding domain"/>
    <property type="match status" value="1"/>
</dbReference>
<dbReference type="PROSITE" id="PS50862">
    <property type="entry name" value="AA_TRNA_LIGASE_II"/>
    <property type="match status" value="1"/>
</dbReference>
<dbReference type="PROSITE" id="PS00762">
    <property type="entry name" value="WHEP_TRS_1"/>
    <property type="match status" value="1"/>
</dbReference>
<dbReference type="PROSITE" id="PS51185">
    <property type="entry name" value="WHEP_TRS_2"/>
    <property type="match status" value="1"/>
</dbReference>
<proteinExistence type="evidence at transcript level"/>
<feature type="initiator methionine" description="Removed" evidence="2">
    <location>
        <position position="1"/>
    </location>
</feature>
<feature type="chain" id="PRO_0000136335" description="Histidine--tRNA ligase, cytoplasmic">
    <location>
        <begin position="2"/>
        <end position="509"/>
    </location>
</feature>
<feature type="domain" description="WHEP-TRS">
    <location>
        <begin position="3"/>
        <end position="59"/>
    </location>
</feature>
<feature type="binding site" evidence="2">
    <location>
        <begin position="130"/>
        <end position="132"/>
    </location>
    <ligand>
        <name>L-histidine</name>
        <dbReference type="ChEBI" id="CHEBI:57595"/>
    </ligand>
</feature>
<feature type="binding site" evidence="2">
    <location>
        <position position="157"/>
    </location>
    <ligand>
        <name>L-histidine</name>
        <dbReference type="ChEBI" id="CHEBI:57595"/>
    </ligand>
</feature>
<feature type="binding site" evidence="2">
    <location>
        <position position="173"/>
    </location>
    <ligand>
        <name>L-histidine</name>
        <dbReference type="ChEBI" id="CHEBI:57595"/>
    </ligand>
</feature>
<feature type="binding site" evidence="2">
    <location>
        <position position="177"/>
    </location>
    <ligand>
        <name>L-histidine</name>
        <dbReference type="ChEBI" id="CHEBI:57595"/>
    </ligand>
</feature>
<feature type="binding site" evidence="2">
    <location>
        <position position="326"/>
    </location>
    <ligand>
        <name>L-histidine</name>
        <dbReference type="ChEBI" id="CHEBI:57595"/>
    </ligand>
</feature>
<feature type="binding site" evidence="2">
    <location>
        <begin position="330"/>
        <end position="331"/>
    </location>
    <ligand>
        <name>L-histidine</name>
        <dbReference type="ChEBI" id="CHEBI:57595"/>
    </ligand>
</feature>
<feature type="modified residue" description="N-acetylalanine" evidence="2">
    <location>
        <position position="2"/>
    </location>
</feature>
<feature type="modified residue" description="Phosphoserine" evidence="3">
    <location>
        <position position="66"/>
    </location>
</feature>
<feature type="modified residue" description="Phosphoserine" evidence="2">
    <location>
        <position position="356"/>
    </location>
</feature>
<reference key="1">
    <citation type="submission" date="2004-11" db="EMBL/GenBank/DDBJ databases">
        <authorList>
            <consortium name="The German cDNA consortium"/>
        </authorList>
    </citation>
    <scope>NUCLEOTIDE SEQUENCE [LARGE SCALE MRNA]</scope>
    <source>
        <tissue>Brain cortex</tissue>
    </source>
</reference>
<protein>
    <recommendedName>
        <fullName>Histidine--tRNA ligase, cytoplasmic</fullName>
        <ecNumber evidence="2">6.1.1.21</ecNumber>
    </recommendedName>
    <alternativeName>
        <fullName>Histidyl-tRNA synthetase</fullName>
        <shortName>HisRS</shortName>
    </alternativeName>
</protein>
<evidence type="ECO:0000250" key="1">
    <source>
        <dbReference type="UniProtKB" id="F1Q5D5"/>
    </source>
</evidence>
<evidence type="ECO:0000250" key="2">
    <source>
        <dbReference type="UniProtKB" id="P12081"/>
    </source>
</evidence>
<evidence type="ECO:0000250" key="3">
    <source>
        <dbReference type="UniProtKB" id="Q99KK9"/>
    </source>
</evidence>
<evidence type="ECO:0000305" key="4"/>
<gene>
    <name type="primary">HARS1</name>
    <name type="synonym">HARS</name>
</gene>